<proteinExistence type="predicted"/>
<protein>
    <recommendedName>
        <fullName>Uncharacterized protein AF_1792</fullName>
    </recommendedName>
</protein>
<organism>
    <name type="scientific">Archaeoglobus fulgidus (strain ATCC 49558 / DSM 4304 / JCM 9628 / NBRC 100126 / VC-16)</name>
    <dbReference type="NCBI Taxonomy" id="224325"/>
    <lineage>
        <taxon>Archaea</taxon>
        <taxon>Methanobacteriati</taxon>
        <taxon>Methanobacteriota</taxon>
        <taxon>Archaeoglobi</taxon>
        <taxon>Archaeoglobales</taxon>
        <taxon>Archaeoglobaceae</taxon>
        <taxon>Archaeoglobus</taxon>
    </lineage>
</organism>
<feature type="chain" id="PRO_0000128057" description="Uncharacterized protein AF_1792">
    <location>
        <begin position="1"/>
        <end position="137"/>
    </location>
</feature>
<feature type="transmembrane region" description="Helical" evidence="1">
    <location>
        <begin position="20"/>
        <end position="39"/>
    </location>
</feature>
<feature type="transmembrane region" description="Helical" evidence="1">
    <location>
        <begin position="44"/>
        <end position="61"/>
    </location>
</feature>
<feature type="transmembrane region" description="Helical" evidence="1">
    <location>
        <begin position="86"/>
        <end position="105"/>
    </location>
</feature>
<feature type="transmembrane region" description="Helical" evidence="1">
    <location>
        <begin position="109"/>
        <end position="131"/>
    </location>
</feature>
<name>Y1792_ARCFU</name>
<dbReference type="EMBL" id="AE000782">
    <property type="protein sequence ID" value="AAB89473.1"/>
    <property type="molecule type" value="Genomic_DNA"/>
</dbReference>
<dbReference type="PIR" id="G69473">
    <property type="entry name" value="G69473"/>
</dbReference>
<dbReference type="STRING" id="224325.AF_1792"/>
<dbReference type="PaxDb" id="224325-AF_1792"/>
<dbReference type="EnsemblBacteria" id="AAB89473">
    <property type="protein sequence ID" value="AAB89473"/>
    <property type="gene ID" value="AF_1792"/>
</dbReference>
<dbReference type="KEGG" id="afu:AF_1792"/>
<dbReference type="eggNOG" id="arCOG04440">
    <property type="taxonomic scope" value="Archaea"/>
</dbReference>
<dbReference type="HOGENOM" id="CLU_161129_0_0_2"/>
<dbReference type="Proteomes" id="UP000002199">
    <property type="component" value="Chromosome"/>
</dbReference>
<dbReference type="GO" id="GO:0005886">
    <property type="term" value="C:plasma membrane"/>
    <property type="evidence" value="ECO:0007669"/>
    <property type="project" value="UniProtKB-SubCell"/>
</dbReference>
<dbReference type="InterPro" id="IPR019235">
    <property type="entry name" value="DUF2178_TM"/>
</dbReference>
<dbReference type="Pfam" id="PF09946">
    <property type="entry name" value="DUF2178"/>
    <property type="match status" value="1"/>
</dbReference>
<sequence length="137" mass="14780">MLCISNIMLEKPNKGGIMRYGKIGVATAMAVGAAVGYAVESGKWFITVIAVLAGVALLSLVKRRVDEVVEDERTVRVGERASRRTVEIFSIGAALSGAVMLALDLHTEAALALEFAVCCVLVLYLIFYGYYSFRALD</sequence>
<comment type="subcellular location">
    <subcellularLocation>
        <location evidence="2">Cell membrane</location>
        <topology evidence="2">Multi-pass membrane protein</topology>
    </subcellularLocation>
</comment>
<accession>O28482</accession>
<keyword id="KW-1003">Cell membrane</keyword>
<keyword id="KW-0472">Membrane</keyword>
<keyword id="KW-1185">Reference proteome</keyword>
<keyword id="KW-0812">Transmembrane</keyword>
<keyword id="KW-1133">Transmembrane helix</keyword>
<evidence type="ECO:0000255" key="1"/>
<evidence type="ECO:0000305" key="2"/>
<reference key="1">
    <citation type="journal article" date="1997" name="Nature">
        <title>The complete genome sequence of the hyperthermophilic, sulphate-reducing archaeon Archaeoglobus fulgidus.</title>
        <authorList>
            <person name="Klenk H.-P."/>
            <person name="Clayton R.A."/>
            <person name="Tomb J.-F."/>
            <person name="White O."/>
            <person name="Nelson K.E."/>
            <person name="Ketchum K.A."/>
            <person name="Dodson R.J."/>
            <person name="Gwinn M.L."/>
            <person name="Hickey E.K."/>
            <person name="Peterson J.D."/>
            <person name="Richardson D.L."/>
            <person name="Kerlavage A.R."/>
            <person name="Graham D.E."/>
            <person name="Kyrpides N.C."/>
            <person name="Fleischmann R.D."/>
            <person name="Quackenbush J."/>
            <person name="Lee N.H."/>
            <person name="Sutton G.G."/>
            <person name="Gill S.R."/>
            <person name="Kirkness E.F."/>
            <person name="Dougherty B.A."/>
            <person name="McKenney K."/>
            <person name="Adams M.D."/>
            <person name="Loftus B.J."/>
            <person name="Peterson S.N."/>
            <person name="Reich C.I."/>
            <person name="McNeil L.K."/>
            <person name="Badger J.H."/>
            <person name="Glodek A."/>
            <person name="Zhou L."/>
            <person name="Overbeek R."/>
            <person name="Gocayne J.D."/>
            <person name="Weidman J.F."/>
            <person name="McDonald L.A."/>
            <person name="Utterback T.R."/>
            <person name="Cotton M.D."/>
            <person name="Spriggs T."/>
            <person name="Artiach P."/>
            <person name="Kaine B.P."/>
            <person name="Sykes S.M."/>
            <person name="Sadow P.W."/>
            <person name="D'Andrea K.P."/>
            <person name="Bowman C."/>
            <person name="Fujii C."/>
            <person name="Garland S.A."/>
            <person name="Mason T.M."/>
            <person name="Olsen G.J."/>
            <person name="Fraser C.M."/>
            <person name="Smith H.O."/>
            <person name="Woese C.R."/>
            <person name="Venter J.C."/>
        </authorList>
    </citation>
    <scope>NUCLEOTIDE SEQUENCE [LARGE SCALE GENOMIC DNA]</scope>
    <source>
        <strain>ATCC 49558 / DSM 4304 / JCM 9628 / NBRC 100126 / VC-16</strain>
    </source>
</reference>
<gene>
    <name type="ordered locus">AF_1792</name>
</gene>